<keyword id="KW-0007">Acetylation</keyword>
<keyword id="KW-0090">Biological rhythms</keyword>
<keyword id="KW-0156">Chromatin regulator</keyword>
<keyword id="KW-0963">Cytoplasm</keyword>
<keyword id="KW-0325">Glycoprotein</keyword>
<keyword id="KW-0328">Glycosyltransferase</keyword>
<keyword id="KW-0446">Lipid-binding</keyword>
<keyword id="KW-0539">Nucleus</keyword>
<keyword id="KW-0597">Phosphoprotein</keyword>
<keyword id="KW-1185">Reference proteome</keyword>
<keyword id="KW-0677">Repeat</keyword>
<keyword id="KW-0802">TPR repeat</keyword>
<keyword id="KW-0808">Transferase</keyword>
<keyword id="KW-0832">Ubl conjugation</keyword>
<proteinExistence type="evidence at transcript level"/>
<evidence type="ECO:0000250" key="1">
    <source>
        <dbReference type="UniProtKB" id="O15294"/>
    </source>
</evidence>
<evidence type="ECO:0000250" key="2">
    <source>
        <dbReference type="UniProtKB" id="P56558"/>
    </source>
</evidence>
<evidence type="ECO:0000250" key="3">
    <source>
        <dbReference type="UniProtKB" id="Q8CGY8"/>
    </source>
</evidence>
<evidence type="ECO:0000255" key="4"/>
<evidence type="ECO:0000305" key="5"/>
<reference key="1">
    <citation type="submission" date="2006-02" db="EMBL/GenBank/DDBJ databases">
        <title>Molecular cloning of swine OGT cDNA and mapping on chromosome X.</title>
        <authorList>
            <person name="Kim J.G."/>
            <person name="Vallet J.L."/>
            <person name="Ford J.J."/>
            <person name="Rohrer G.A."/>
            <person name="Nonneman D."/>
        </authorList>
    </citation>
    <scope>NUCLEOTIDE SEQUENCE [MRNA]</scope>
</reference>
<sequence length="1046" mass="116923">MASSVGNVADSTEPTKRMLSFQGLAELAHREYQAGDFEAAERHCMQLWRQEPDNTGVLLLLSSIHFQCRRLDRSAHFSTLAIKQNPLLAEAYSNLGNVYKERGQLQEAIEHYRHALRLKPDFIDGYINLAAALVAAGDMEGAVQAYVSALQYNPDLYCVRSDLGNLLKALGRLEEAKACYLKAIETQPNFAVAWSNLGCVFNAQGEIWLAIHHFEKAVTLDPNFLDAYINLGNVLKEARIFDRAVAAYLRALSLSPNHAVVHGNLACVYYEQGLIDLAIDTYRRAIELQPHFPDAYCNLANALKEKGSVAEAEDCYNTALRLCPTHADSLNNLANIKREQGNIEEAVRLYRKALEVFPEFAAAHSNLASVLQQQGKLQEALMHYKEAIRISPTFADAYSNMGNTLKEMQDVQGALQCYTRAIQINPAFADAHSNLASIHKDSGNIPEAIASYRTALKLKPDFPDAYCNLAHCLQIVCDWTDYDERMKKLVSIVADQLEKNRLPSVHPHHSMLYPLSHGFRKAIAERHGNLCLDKINVLHKPPYEHPKDLKLSDGRLRVGYVSSDFGNHPTSHLMQSIPGMHNPDKFEVFCYALSPDDGTNFRVKVMAEANHFIDLSQIPCNGKAADRIHQDGIHILVNMNGYTKGARNELFALRPAPIQAMWLGYPGTSGALFMDYIITDQETSPAEVAEQYSEKLAYMPHTFFIGDHANMFPHLKKKAVIDFKSNGHIYDNRIVLNGIDLKAFLDSLPDVKIVKMKCPDGGDNADSSNTALNMPVIPMNTIAEAVIEMINRGQIQITINGFSISNGLATTQINNKAATGEEVPRTIIVTTRSQYGLPEDAIVYCNFNQLYKIDPSTLQMWANILKRVPNSVLWLLRFPAVGEPNIQQYAQNMGLPQNRIIFSPVAPKEEHVRRGQLADVCLDTPLCNGHTTGMDVLWAGTPMVTMPGETLASRVAASQLTCLGCLELIAKNRQEFEDIAVKLGTDLEYLKKIRGKVWKQRISSPLFNTKQYTMELERLYLQMWEHYAAGNKPDHMIKPVEVTESA</sequence>
<comment type="function">
    <text evidence="1 2 3">Catalyzes the transfer of a single N-acetylglucosamine from UDP-GlcNAc to a serine or threonine residue in cytoplasmic and nuclear proteins resulting in their modification with a beta-linked N-acetylglucosamine (O-GlcNAc). Glycosylates a large and diverse number of proteins including histone H2B, AKT1, AMPK, ATG4B, CAPRIN1, EZH2, FNIP1, GSDMD, KRT7, LMNA, LMNB1, LMNB2, RPTOR, HOXA1, PFKL, KMT2E/MLL5, MAPT/TAU, TET2, RBL2, RET, NOD2 and HCFC1. Can regulate their cellular processes via cross-talk between glycosylation and phosphorylation or by affecting proteolytic processing (By similarity). Involved in insulin resistance in muscle and adipocyte cells via glycosylating insulin signaling components and inhibiting the 'Thr-308' phosphorylation of AKT1, enhancing IRS1 phosphorylation and attenuating insulin signaling (By similarity). Involved in glycolysis regulation by mediating glycosylation of 6-phosphofructokinase PFKL, inhibiting its activity. Plays a key role in chromatin structure by mediating O-GlcNAcylation of 'Ser-112' of histone H2B: recruited to CpG-rich transcription start sites of active genes via its interaction with TET proteins (TET1, TET2 or TET3). As part of the NSL complex indirectly involved in acetylation of nucleosomal histone H4 on several lysine residues. O-GlcNAcylation of 'Ser-75' of EZH2 increases its stability, and facilitating the formation of H3K27me3 by the PRC2/EED-EZH2 complex. Stabilizes KMT2E/MLL5 by mediating its glycosylation, thereby preventing KMT2E/MLL5 ubiquitination (By similarity). Regulates circadian oscillation of the clock genes and glucose homeostasis in the liver (By similarity). Stabilizes clock proteins BMAL1 and CLOCK through O-glycosylation, which prevents their ubiquitination and subsequent degradation (By similarity). Promotes the CLOCK-BMAL1-mediated transcription of genes in the negative loop of the circadian clock such as PER1/2 and CRY1/2. O-glycosylates HCFC1 and regulates its proteolytic processing and transcriptional activity. Component of a THAP1/THAP3-HCFC1-OGT complex that is required for the regulation of the transcriptional activity of RRM1 (By similarity). Regulates mitochondrial motility in neurons by mediating glycosylation of TRAK1 (By similarity). Promotes autophagy by mediating O-glycosylation of ATG4B. Acts as a regulator of mTORC1 signaling by mediating O-glycosylation of RPTOR and FNIP1: O-GlcNAcylation of RPTOR in response to glucose sufficiency promotes activation of the mTORC1 complex (By similarity).</text>
</comment>
<comment type="catalytic activity">
    <reaction evidence="1">
        <text>L-seryl-[protein] + UDP-N-acetyl-alpha-D-glucosamine = 3-O-(N-acetyl-beta-D-glucosaminyl)-L-seryl-[protein] + UDP + H(+)</text>
        <dbReference type="Rhea" id="RHEA:48904"/>
        <dbReference type="Rhea" id="RHEA-COMP:9863"/>
        <dbReference type="Rhea" id="RHEA-COMP:12251"/>
        <dbReference type="ChEBI" id="CHEBI:15378"/>
        <dbReference type="ChEBI" id="CHEBI:29999"/>
        <dbReference type="ChEBI" id="CHEBI:57705"/>
        <dbReference type="ChEBI" id="CHEBI:58223"/>
        <dbReference type="ChEBI" id="CHEBI:90838"/>
        <dbReference type="EC" id="2.4.1.255"/>
    </reaction>
    <physiologicalReaction direction="left-to-right" evidence="1">
        <dbReference type="Rhea" id="RHEA:48905"/>
    </physiologicalReaction>
</comment>
<comment type="catalytic activity">
    <reaction evidence="1">
        <text>L-threonyl-[protein] + UDP-N-acetyl-alpha-D-glucosamine = 3-O-(N-acetyl-beta-D-glucosaminyl)-L-threonyl-[protein] + UDP + H(+)</text>
        <dbReference type="Rhea" id="RHEA:48908"/>
        <dbReference type="Rhea" id="RHEA-COMP:11060"/>
        <dbReference type="Rhea" id="RHEA-COMP:12252"/>
        <dbReference type="ChEBI" id="CHEBI:15378"/>
        <dbReference type="ChEBI" id="CHEBI:30013"/>
        <dbReference type="ChEBI" id="CHEBI:57705"/>
        <dbReference type="ChEBI" id="CHEBI:58223"/>
        <dbReference type="ChEBI" id="CHEBI:90840"/>
        <dbReference type="EC" id="2.4.1.255"/>
    </reaction>
    <physiologicalReaction direction="left-to-right" evidence="1">
        <dbReference type="Rhea" id="RHEA:48909"/>
    </physiologicalReaction>
</comment>
<comment type="activity regulation">
    <text evidence="1">Subject to product inhibition by UDP.</text>
</comment>
<comment type="pathway">
    <text evidence="1">Protein modification; protein glycosylation.</text>
</comment>
<comment type="subunit">
    <text evidence="1 2 3">Monomer; may exist in different oligomerization states in cells (By similarity). Homotrimer, oligomerizes via TPR repeats 6 and 7. Trimerization is not necessary for activity in vitro, however it increases affinity for UDP-GlcNAc (By similarity). Component of a THAP1/THAP3-HCFC1-OGT complex. Component of the NSL complex at least composed of MOF/KAT8, KANSL1, KANSL2, KANSL3, MCRS1, PHF20, OGT1/OGT, WDR5 and HCFC1. Found in a complex with KIF5B, RHOT1, RHOT2 and TRAK1 (By similarity). Found in a complex composed of at least SINHCAF, SIN3A, HDAC1, SAP30, RBBP4, OGT and TET1. Component of a complex composed of KMT2E/MLL5, OGT and USP7; the complex stabilizes KMT2E/MLL5, preventing KMT2E/MLL5 ubiquitination and proteasomal-mediated degradation. Interacts (via TPRs 1-6) with SIN3A; the interaction mediates transcriptional repression in parallel with histone deacetylase. Interacts (via TPR 5-6) with TET1, TET2 and TET3 (By similarity). Interacts (via TPR repeats 6 and 7) with ATXN10 (By similarity). Interacts with NSD2 (By similarity). Interacts with PROSER1; this interaction mediates TET2 O-GlcNAcylation and stability by promoting the interaction between OGT and TET2 (By similarity).</text>
</comment>
<comment type="subcellular location">
    <subcellularLocation>
        <location evidence="1">Nucleus</location>
    </subcellularLocation>
    <subcellularLocation>
        <location evidence="1">Cytoplasm</location>
    </subcellularLocation>
    <text evidence="1">Predominantly localizes to the nucleus. Translocates into the nucleus via association with importin KPNA1.</text>
</comment>
<comment type="domain">
    <text evidence="1">The TPR repeat domain is required for substrate binding and oligomerization.</text>
</comment>
<comment type="PTM">
    <text evidence="1">Ubiquitinated by the SCF(FBXO31) complex, leading to its proteasomal degradation.</text>
</comment>
<comment type="PTM">
    <text evidence="1 3">Phosphorylation on Ser-3 or Ser-4 by GSK3-beta positively regulates its activity (By similarity). Phosphorylation at Thr-454 by AMPK promotes nuclear localization (By similarity).</text>
</comment>
<comment type="PTM">
    <text evidence="1">Glycosylated via autocatalysis; O-GlcNAcylation at Ser-399 promotes nuclear localization.</text>
</comment>
<comment type="similarity">
    <text evidence="5">Belongs to the glycosyltransferase 41 family. O-GlcNAc transferase subfamily.</text>
</comment>
<gene>
    <name type="primary">OGT</name>
</gene>
<dbReference type="EC" id="2.4.1.255" evidence="1"/>
<dbReference type="EMBL" id="DQ400859">
    <property type="protein sequence ID" value="ABD61726.1"/>
    <property type="molecule type" value="mRNA"/>
</dbReference>
<dbReference type="RefSeq" id="NP_001034837.1">
    <property type="nucleotide sequence ID" value="NM_001039748.2"/>
</dbReference>
<dbReference type="SMR" id="Q27HV0"/>
<dbReference type="FunCoup" id="Q27HV0">
    <property type="interactions" value="1447"/>
</dbReference>
<dbReference type="STRING" id="9823.ENSSSCP00000028433"/>
<dbReference type="CAZy" id="GT41">
    <property type="family name" value="Glycosyltransferase Family 41"/>
</dbReference>
<dbReference type="GlyCosmos" id="Q27HV0">
    <property type="glycosylation" value="2 sites, No reported glycans"/>
</dbReference>
<dbReference type="GlyGen" id="Q27HV0">
    <property type="glycosylation" value="3 sites"/>
</dbReference>
<dbReference type="PaxDb" id="9823-ENSSSCP00000013198"/>
<dbReference type="PeptideAtlas" id="Q27HV0"/>
<dbReference type="GeneID" id="664652"/>
<dbReference type="KEGG" id="ssc:664652"/>
<dbReference type="CTD" id="8473"/>
<dbReference type="eggNOG" id="KOG1124">
    <property type="taxonomic scope" value="Eukaryota"/>
</dbReference>
<dbReference type="eggNOG" id="KOG4626">
    <property type="taxonomic scope" value="Eukaryota"/>
</dbReference>
<dbReference type="InParanoid" id="Q27HV0"/>
<dbReference type="OrthoDB" id="9991317at2759"/>
<dbReference type="UniPathway" id="UPA00378"/>
<dbReference type="ChiTaRS" id="EOGT">
    <property type="organism name" value="pig"/>
</dbReference>
<dbReference type="Proteomes" id="UP000008227">
    <property type="component" value="Unplaced"/>
</dbReference>
<dbReference type="Proteomes" id="UP000314985">
    <property type="component" value="Unplaced"/>
</dbReference>
<dbReference type="Proteomes" id="UP000694570">
    <property type="component" value="Unplaced"/>
</dbReference>
<dbReference type="Proteomes" id="UP000694571">
    <property type="component" value="Unplaced"/>
</dbReference>
<dbReference type="Proteomes" id="UP000694720">
    <property type="component" value="Unplaced"/>
</dbReference>
<dbReference type="Proteomes" id="UP000694722">
    <property type="component" value="Unplaced"/>
</dbReference>
<dbReference type="Proteomes" id="UP000694723">
    <property type="component" value="Unplaced"/>
</dbReference>
<dbReference type="Proteomes" id="UP000694724">
    <property type="component" value="Unplaced"/>
</dbReference>
<dbReference type="Proteomes" id="UP000694725">
    <property type="component" value="Unplaced"/>
</dbReference>
<dbReference type="Proteomes" id="UP000694726">
    <property type="component" value="Unplaced"/>
</dbReference>
<dbReference type="Proteomes" id="UP000694727">
    <property type="component" value="Unplaced"/>
</dbReference>
<dbReference type="Proteomes" id="UP000694728">
    <property type="component" value="Unplaced"/>
</dbReference>
<dbReference type="GO" id="GO:0005829">
    <property type="term" value="C:cytosol"/>
    <property type="evidence" value="ECO:0000250"/>
    <property type="project" value="UniProtKB"/>
</dbReference>
<dbReference type="GO" id="GO:0000123">
    <property type="term" value="C:histone acetyltransferase complex"/>
    <property type="evidence" value="ECO:0000250"/>
    <property type="project" value="UniProtKB"/>
</dbReference>
<dbReference type="GO" id="GO:0005634">
    <property type="term" value="C:nucleus"/>
    <property type="evidence" value="ECO:0000250"/>
    <property type="project" value="UniProtKB"/>
</dbReference>
<dbReference type="GO" id="GO:0005886">
    <property type="term" value="C:plasma membrane"/>
    <property type="evidence" value="ECO:0000250"/>
    <property type="project" value="UniProtKB"/>
</dbReference>
<dbReference type="GO" id="GO:0016757">
    <property type="term" value="F:glycosyltransferase activity"/>
    <property type="evidence" value="ECO:0000318"/>
    <property type="project" value="GO_Central"/>
</dbReference>
<dbReference type="GO" id="GO:0005547">
    <property type="term" value="F:phosphatidylinositol-3,4,5-trisphosphate binding"/>
    <property type="evidence" value="ECO:0000250"/>
    <property type="project" value="UniProtKB"/>
</dbReference>
<dbReference type="GO" id="GO:0097363">
    <property type="term" value="F:protein O-acetylglucosaminyltransferase activity"/>
    <property type="evidence" value="ECO:0000250"/>
    <property type="project" value="UniProtKB"/>
</dbReference>
<dbReference type="GO" id="GO:0006915">
    <property type="term" value="P:apoptotic process"/>
    <property type="evidence" value="ECO:0000250"/>
    <property type="project" value="UniProtKB"/>
</dbReference>
<dbReference type="GO" id="GO:0071333">
    <property type="term" value="P:cellular response to glucose stimulus"/>
    <property type="evidence" value="ECO:0000250"/>
    <property type="project" value="UniProtKB"/>
</dbReference>
<dbReference type="GO" id="GO:0006325">
    <property type="term" value="P:chromatin organization"/>
    <property type="evidence" value="ECO:0007669"/>
    <property type="project" value="UniProtKB-KW"/>
</dbReference>
<dbReference type="GO" id="GO:0032922">
    <property type="term" value="P:circadian regulation of gene expression"/>
    <property type="evidence" value="ECO:0000250"/>
    <property type="project" value="UniProtKB"/>
</dbReference>
<dbReference type="GO" id="GO:0160076">
    <property type="term" value="P:negative regulation of non-canonical inflammasome complex assembly"/>
    <property type="evidence" value="ECO:0000250"/>
    <property type="project" value="UniProtKB"/>
</dbReference>
<dbReference type="GO" id="GO:0031397">
    <property type="term" value="P:negative regulation of protein ubiquitination"/>
    <property type="evidence" value="ECO:0000250"/>
    <property type="project" value="UniProtKB"/>
</dbReference>
<dbReference type="GO" id="GO:0045862">
    <property type="term" value="P:positive regulation of proteolysis"/>
    <property type="evidence" value="ECO:0000250"/>
    <property type="project" value="UniProtKB"/>
</dbReference>
<dbReference type="GO" id="GO:1904263">
    <property type="term" value="P:positive regulation of TORC1 signaling"/>
    <property type="evidence" value="ECO:0000250"/>
    <property type="project" value="UniProtKB"/>
</dbReference>
<dbReference type="GO" id="GO:0045944">
    <property type="term" value="P:positive regulation of transcription by RNA polymerase II"/>
    <property type="evidence" value="ECO:0000250"/>
    <property type="project" value="UniProtKB"/>
</dbReference>
<dbReference type="GO" id="GO:0006493">
    <property type="term" value="P:protein O-linked glycosylation"/>
    <property type="evidence" value="ECO:0000250"/>
    <property type="project" value="UniProtKB"/>
</dbReference>
<dbReference type="GO" id="GO:0016485">
    <property type="term" value="P:protein processing"/>
    <property type="evidence" value="ECO:0000250"/>
    <property type="project" value="UniProtKB"/>
</dbReference>
<dbReference type="GO" id="GO:0006111">
    <property type="term" value="P:regulation of gluconeogenesis"/>
    <property type="evidence" value="ECO:0000250"/>
    <property type="project" value="UniProtKB"/>
</dbReference>
<dbReference type="GO" id="GO:0006110">
    <property type="term" value="P:regulation of glycolytic process"/>
    <property type="evidence" value="ECO:0000250"/>
    <property type="project" value="UniProtKB"/>
</dbReference>
<dbReference type="FunFam" id="1.25.40.10:FF:000013">
    <property type="entry name" value="UDP-N-acetylglucosamine--peptide N-acetylglucosaminyltransferase 110 kDa subunit"/>
    <property type="match status" value="1"/>
</dbReference>
<dbReference type="FunFam" id="1.25.40.10:FF:000019">
    <property type="entry name" value="UDP-N-acetylglucosamine--peptide N-acetylglucosaminyltransferase 110 kDa subunit"/>
    <property type="match status" value="1"/>
</dbReference>
<dbReference type="FunFam" id="3.30.720.150:FF:000001">
    <property type="entry name" value="UDP-N-acetylglucosamine--peptide N-acetylglucosaminyltransferase 110 kDa subunit"/>
    <property type="match status" value="1"/>
</dbReference>
<dbReference type="FunFam" id="3.40.50.11380:FF:000001">
    <property type="entry name" value="UDP-N-acetylglucosamine--peptide N-acetylglucosaminyltransferase 110 kDa subunit"/>
    <property type="match status" value="1"/>
</dbReference>
<dbReference type="FunFam" id="3.40.50.2000:FF:000012">
    <property type="entry name" value="UDP-N-acetylglucosamine--peptide N-acetylglucosaminyltransferase 110 kDa subunit"/>
    <property type="match status" value="1"/>
</dbReference>
<dbReference type="Gene3D" id="3.30.720.150">
    <property type="match status" value="1"/>
</dbReference>
<dbReference type="Gene3D" id="3.40.50.11380">
    <property type="match status" value="1"/>
</dbReference>
<dbReference type="Gene3D" id="3.40.50.2000">
    <property type="entry name" value="Glycogen Phosphorylase B"/>
    <property type="match status" value="1"/>
</dbReference>
<dbReference type="Gene3D" id="1.25.40.10">
    <property type="entry name" value="Tetratricopeptide repeat domain"/>
    <property type="match status" value="2"/>
</dbReference>
<dbReference type="InterPro" id="IPR037919">
    <property type="entry name" value="OGT"/>
</dbReference>
<dbReference type="InterPro" id="IPR029489">
    <property type="entry name" value="OGT/SEC/SPY_C"/>
</dbReference>
<dbReference type="InterPro" id="IPR011990">
    <property type="entry name" value="TPR-like_helical_dom_sf"/>
</dbReference>
<dbReference type="InterPro" id="IPR019734">
    <property type="entry name" value="TPR_rpt"/>
</dbReference>
<dbReference type="PANTHER" id="PTHR44366">
    <property type="entry name" value="UDP-N-ACETYLGLUCOSAMINE--PEPTIDE N-ACETYLGLUCOSAMINYLTRANSFERASE 110 KDA SUBUNIT"/>
    <property type="match status" value="1"/>
</dbReference>
<dbReference type="PANTHER" id="PTHR44366:SF1">
    <property type="entry name" value="UDP-N-ACETYLGLUCOSAMINE--PEPTIDE N-ACETYLGLUCOSAMINYLTRANSFERASE 110 KDA SUBUNIT"/>
    <property type="match status" value="1"/>
</dbReference>
<dbReference type="Pfam" id="PF13844">
    <property type="entry name" value="Glyco_transf_41"/>
    <property type="match status" value="1"/>
</dbReference>
<dbReference type="Pfam" id="PF00515">
    <property type="entry name" value="TPR_1"/>
    <property type="match status" value="2"/>
</dbReference>
<dbReference type="Pfam" id="PF13414">
    <property type="entry name" value="TPR_11"/>
    <property type="match status" value="3"/>
</dbReference>
<dbReference type="Pfam" id="PF13424">
    <property type="entry name" value="TPR_12"/>
    <property type="match status" value="1"/>
</dbReference>
<dbReference type="Pfam" id="PF13181">
    <property type="entry name" value="TPR_8"/>
    <property type="match status" value="2"/>
</dbReference>
<dbReference type="SMART" id="SM00028">
    <property type="entry name" value="TPR"/>
    <property type="match status" value="12"/>
</dbReference>
<dbReference type="SUPFAM" id="SSF48452">
    <property type="entry name" value="TPR-like"/>
    <property type="match status" value="3"/>
</dbReference>
<dbReference type="PROSITE" id="PS50005">
    <property type="entry name" value="TPR"/>
    <property type="match status" value="12"/>
</dbReference>
<dbReference type="PROSITE" id="PS50293">
    <property type="entry name" value="TPR_REGION"/>
    <property type="match status" value="1"/>
</dbReference>
<name>OGT1_PIG</name>
<accession>Q27HV0</accession>
<feature type="initiator methionine" description="Removed" evidence="1">
    <location>
        <position position="1"/>
    </location>
</feature>
<feature type="chain" id="PRO_0000289993" description="UDP-N-acetylglucosamine--peptide N-acetylglucosaminyltransferase 110 kDa subunit">
    <location>
        <begin position="2"/>
        <end position="1046"/>
    </location>
</feature>
<feature type="repeat" description="TPR 1">
    <location>
        <begin position="21"/>
        <end position="54"/>
    </location>
</feature>
<feature type="repeat" description="TPR 2">
    <location>
        <begin position="89"/>
        <end position="122"/>
    </location>
</feature>
<feature type="repeat" description="TPR 3">
    <location>
        <begin position="123"/>
        <end position="156"/>
    </location>
</feature>
<feature type="repeat" description="TPR 4">
    <location>
        <begin position="157"/>
        <end position="190"/>
    </location>
</feature>
<feature type="repeat" description="TPR 5">
    <location>
        <begin position="191"/>
        <end position="224"/>
    </location>
</feature>
<feature type="repeat" description="TPR 6">
    <location>
        <begin position="225"/>
        <end position="258"/>
    </location>
</feature>
<feature type="repeat" description="TPR 7">
    <location>
        <begin position="259"/>
        <end position="292"/>
    </location>
</feature>
<feature type="repeat" description="TPR 8">
    <location>
        <begin position="293"/>
        <end position="326"/>
    </location>
</feature>
<feature type="repeat" description="TPR 9">
    <location>
        <begin position="327"/>
        <end position="360"/>
    </location>
</feature>
<feature type="repeat" description="TPR 10">
    <location>
        <begin position="361"/>
        <end position="394"/>
    </location>
</feature>
<feature type="repeat" description="TPR 11">
    <location>
        <begin position="395"/>
        <end position="428"/>
    </location>
</feature>
<feature type="repeat" description="TPR 12">
    <location>
        <begin position="429"/>
        <end position="462"/>
    </location>
</feature>
<feature type="repeat" description="TPR 13; truncated">
    <location>
        <begin position="463"/>
        <end position="473"/>
    </location>
</feature>
<feature type="region of interest" description="Required for phosphatidylinositol 3,4,5-triphosphate binding" evidence="2">
    <location>
        <begin position="991"/>
        <end position="1010"/>
    </location>
</feature>
<feature type="short sequence motif" description="DFP motif" evidence="1">
    <location>
        <begin position="464"/>
        <end position="466"/>
    </location>
</feature>
<feature type="short sequence motif" description="Nuclear localization signal" evidence="4">
    <location>
        <begin position="487"/>
        <end position="503"/>
    </location>
</feature>
<feature type="active site" description="Proton acceptor" evidence="1">
    <location>
        <position position="508"/>
    </location>
</feature>
<feature type="binding site" evidence="1">
    <location>
        <position position="849"/>
    </location>
    <ligand>
        <name>UDP</name>
        <dbReference type="ChEBI" id="CHEBI:58223"/>
    </ligand>
</feature>
<feature type="binding site" evidence="1">
    <location>
        <position position="852"/>
    </location>
    <ligand>
        <name>UDP</name>
        <dbReference type="ChEBI" id="CHEBI:58223"/>
    </ligand>
</feature>
<feature type="binding site" evidence="1">
    <location>
        <begin position="906"/>
        <end position="908"/>
    </location>
    <ligand>
        <name>UDP</name>
        <dbReference type="ChEBI" id="CHEBI:58223"/>
    </ligand>
</feature>
<feature type="binding site" evidence="1">
    <location>
        <begin position="911"/>
        <end position="914"/>
    </location>
    <ligand>
        <name>UDP</name>
        <dbReference type="ChEBI" id="CHEBI:58223"/>
    </ligand>
</feature>
<feature type="binding site" evidence="1">
    <location>
        <begin position="930"/>
        <end position="932"/>
    </location>
    <ligand>
        <name>UDP</name>
        <dbReference type="ChEBI" id="CHEBI:58223"/>
    </ligand>
</feature>
<feature type="binding site" evidence="1">
    <location>
        <position position="935"/>
    </location>
    <ligand>
        <name>UDP</name>
        <dbReference type="ChEBI" id="CHEBI:58223"/>
    </ligand>
</feature>
<feature type="modified residue" description="N-acetylalanine" evidence="1">
    <location>
        <position position="2"/>
    </location>
</feature>
<feature type="modified residue" description="Phosphoserine; by GSK3-beta; alternate" evidence="3">
    <location>
        <position position="3"/>
    </location>
</feature>
<feature type="modified residue" description="Phosphoserine; by GSK3-beta; alternate" evidence="3">
    <location>
        <position position="4"/>
    </location>
</feature>
<feature type="modified residue" description="Phosphoserine" evidence="1">
    <location>
        <position position="20"/>
    </location>
</feature>
<feature type="modified residue" description="Phosphothreonine" evidence="1">
    <location>
        <position position="454"/>
    </location>
</feature>
<feature type="modified residue" description="Phosphotyrosine" evidence="2">
    <location>
        <position position="989"/>
    </location>
</feature>
<feature type="glycosylation site" description="O-linked (GlcNAc) serine; alternate" evidence="3">
    <location>
        <position position="3"/>
    </location>
</feature>
<feature type="glycosylation site" description="O-linked (GlcNAc) serine; alternate" evidence="3">
    <location>
        <position position="4"/>
    </location>
</feature>
<feature type="glycosylation site" description="O-linked (GlcNAc) serine; by autocatalysis" evidence="1">
    <location>
        <position position="399"/>
    </location>
</feature>
<organism>
    <name type="scientific">Sus scrofa</name>
    <name type="common">Pig</name>
    <dbReference type="NCBI Taxonomy" id="9823"/>
    <lineage>
        <taxon>Eukaryota</taxon>
        <taxon>Metazoa</taxon>
        <taxon>Chordata</taxon>
        <taxon>Craniata</taxon>
        <taxon>Vertebrata</taxon>
        <taxon>Euteleostomi</taxon>
        <taxon>Mammalia</taxon>
        <taxon>Eutheria</taxon>
        <taxon>Laurasiatheria</taxon>
        <taxon>Artiodactyla</taxon>
        <taxon>Suina</taxon>
        <taxon>Suidae</taxon>
        <taxon>Sus</taxon>
    </lineage>
</organism>
<protein>
    <recommendedName>
        <fullName>UDP-N-acetylglucosamine--peptide N-acetylglucosaminyltransferase 110 kDa subunit</fullName>
        <ecNumber evidence="1">2.4.1.255</ecNumber>
    </recommendedName>
    <alternativeName>
        <fullName>O-GlcNAc transferase subunit p110</fullName>
    </alternativeName>
    <alternativeName>
        <fullName>O-linked N-acetylglucosamine transferase 110 kDa subunit</fullName>
        <shortName>OGT</shortName>
    </alternativeName>
</protein>